<accession>A5GIK5</accession>
<dbReference type="EC" id="2.1.3.2" evidence="1"/>
<dbReference type="EMBL" id="CT971583">
    <property type="protein sequence ID" value="CAK22770.1"/>
    <property type="molecule type" value="Genomic_DNA"/>
</dbReference>
<dbReference type="SMR" id="A5GIK5"/>
<dbReference type="STRING" id="32051.SynWH7803_0344"/>
<dbReference type="KEGG" id="syx:SynWH7803_0344"/>
<dbReference type="eggNOG" id="COG0540">
    <property type="taxonomic scope" value="Bacteria"/>
</dbReference>
<dbReference type="HOGENOM" id="CLU_043846_2_0_3"/>
<dbReference type="OrthoDB" id="9774690at2"/>
<dbReference type="UniPathway" id="UPA00070">
    <property type="reaction ID" value="UER00116"/>
</dbReference>
<dbReference type="Proteomes" id="UP000001566">
    <property type="component" value="Chromosome"/>
</dbReference>
<dbReference type="GO" id="GO:0005829">
    <property type="term" value="C:cytosol"/>
    <property type="evidence" value="ECO:0007669"/>
    <property type="project" value="TreeGrafter"/>
</dbReference>
<dbReference type="GO" id="GO:0016597">
    <property type="term" value="F:amino acid binding"/>
    <property type="evidence" value="ECO:0007669"/>
    <property type="project" value="InterPro"/>
</dbReference>
<dbReference type="GO" id="GO:0004070">
    <property type="term" value="F:aspartate carbamoyltransferase activity"/>
    <property type="evidence" value="ECO:0007669"/>
    <property type="project" value="UniProtKB-UniRule"/>
</dbReference>
<dbReference type="GO" id="GO:0006207">
    <property type="term" value="P:'de novo' pyrimidine nucleobase biosynthetic process"/>
    <property type="evidence" value="ECO:0007669"/>
    <property type="project" value="InterPro"/>
</dbReference>
<dbReference type="GO" id="GO:0044205">
    <property type="term" value="P:'de novo' UMP biosynthetic process"/>
    <property type="evidence" value="ECO:0007669"/>
    <property type="project" value="UniProtKB-UniRule"/>
</dbReference>
<dbReference type="GO" id="GO:0006520">
    <property type="term" value="P:amino acid metabolic process"/>
    <property type="evidence" value="ECO:0007669"/>
    <property type="project" value="InterPro"/>
</dbReference>
<dbReference type="Gene3D" id="3.40.50.1370">
    <property type="entry name" value="Aspartate/ornithine carbamoyltransferase"/>
    <property type="match status" value="2"/>
</dbReference>
<dbReference type="HAMAP" id="MF_00001">
    <property type="entry name" value="Asp_carb_tr"/>
    <property type="match status" value="1"/>
</dbReference>
<dbReference type="InterPro" id="IPR006132">
    <property type="entry name" value="Asp/Orn_carbamoyltranf_P-bd"/>
</dbReference>
<dbReference type="InterPro" id="IPR006130">
    <property type="entry name" value="Asp/Orn_carbamoylTrfase"/>
</dbReference>
<dbReference type="InterPro" id="IPR036901">
    <property type="entry name" value="Asp/Orn_carbamoylTrfase_sf"/>
</dbReference>
<dbReference type="InterPro" id="IPR002082">
    <property type="entry name" value="Asp_carbamoyltransf"/>
</dbReference>
<dbReference type="InterPro" id="IPR006131">
    <property type="entry name" value="Asp_carbamoyltransf_Asp/Orn-bd"/>
</dbReference>
<dbReference type="NCBIfam" id="TIGR00670">
    <property type="entry name" value="asp_carb_tr"/>
    <property type="match status" value="1"/>
</dbReference>
<dbReference type="NCBIfam" id="NF002032">
    <property type="entry name" value="PRK00856.1"/>
    <property type="match status" value="1"/>
</dbReference>
<dbReference type="PANTHER" id="PTHR45753:SF6">
    <property type="entry name" value="ASPARTATE CARBAMOYLTRANSFERASE"/>
    <property type="match status" value="1"/>
</dbReference>
<dbReference type="PANTHER" id="PTHR45753">
    <property type="entry name" value="ORNITHINE CARBAMOYLTRANSFERASE, MITOCHONDRIAL"/>
    <property type="match status" value="1"/>
</dbReference>
<dbReference type="Pfam" id="PF00185">
    <property type="entry name" value="OTCace"/>
    <property type="match status" value="1"/>
</dbReference>
<dbReference type="Pfam" id="PF02729">
    <property type="entry name" value="OTCace_N"/>
    <property type="match status" value="1"/>
</dbReference>
<dbReference type="PRINTS" id="PR00100">
    <property type="entry name" value="AOTCASE"/>
</dbReference>
<dbReference type="PRINTS" id="PR00101">
    <property type="entry name" value="ATCASE"/>
</dbReference>
<dbReference type="SUPFAM" id="SSF53671">
    <property type="entry name" value="Aspartate/ornithine carbamoyltransferase"/>
    <property type="match status" value="1"/>
</dbReference>
<dbReference type="PROSITE" id="PS00097">
    <property type="entry name" value="CARBAMOYLTRANSFERASE"/>
    <property type="match status" value="1"/>
</dbReference>
<sequence>MSAWTHRHILDLSTFSREDYAAVLELAHRFSAMPVTGARRLPALQGRLVATLFFEPSTRTRSSFELAAKRLSADVSSFSPSSSSLSKGESLLDTARTYVAMGADVLVVRHRCTGVPRQLAEALERTGERTVVLNGGDGLHSHPSQGLLDLYTLAQHFNPSHPLPEALRGRRIVIVGDVLHSRVARSNLWALTACGADVILCGPPSLVPEAFAQFVAQPPPGQASDPVADRGALTVVRNLDDALAGADAVMTLRLQKERMRQHMLTSLDRYHRDFGLSHERLQVCQVPIPVLHPGPVNRGVEMSGALLDDLSANRVEDQVRNGIPIRMALLYLMAAAESPLSL</sequence>
<reference key="1">
    <citation type="submission" date="2006-05" db="EMBL/GenBank/DDBJ databases">
        <authorList>
            <consortium name="Genoscope"/>
        </authorList>
    </citation>
    <scope>NUCLEOTIDE SEQUENCE [LARGE SCALE GENOMIC DNA]</scope>
    <source>
        <strain>WH7803</strain>
    </source>
</reference>
<feature type="chain" id="PRO_0000301634" description="Aspartate carbamoyltransferase catalytic subunit">
    <location>
        <begin position="1"/>
        <end position="342"/>
    </location>
</feature>
<feature type="binding site" evidence="1">
    <location>
        <position position="59"/>
    </location>
    <ligand>
        <name>carbamoyl phosphate</name>
        <dbReference type="ChEBI" id="CHEBI:58228"/>
    </ligand>
</feature>
<feature type="binding site" evidence="1">
    <location>
        <position position="60"/>
    </location>
    <ligand>
        <name>carbamoyl phosphate</name>
        <dbReference type="ChEBI" id="CHEBI:58228"/>
    </ligand>
</feature>
<feature type="binding site" evidence="1">
    <location>
        <position position="87"/>
    </location>
    <ligand>
        <name>L-aspartate</name>
        <dbReference type="ChEBI" id="CHEBI:29991"/>
    </ligand>
</feature>
<feature type="binding site" evidence="1">
    <location>
        <position position="109"/>
    </location>
    <ligand>
        <name>carbamoyl phosphate</name>
        <dbReference type="ChEBI" id="CHEBI:58228"/>
    </ligand>
</feature>
<feature type="binding site" evidence="1">
    <location>
        <position position="142"/>
    </location>
    <ligand>
        <name>carbamoyl phosphate</name>
        <dbReference type="ChEBI" id="CHEBI:58228"/>
    </ligand>
</feature>
<feature type="binding site" evidence="1">
    <location>
        <position position="145"/>
    </location>
    <ligand>
        <name>carbamoyl phosphate</name>
        <dbReference type="ChEBI" id="CHEBI:58228"/>
    </ligand>
</feature>
<feature type="binding site" evidence="1">
    <location>
        <position position="182"/>
    </location>
    <ligand>
        <name>L-aspartate</name>
        <dbReference type="ChEBI" id="CHEBI:29991"/>
    </ligand>
</feature>
<feature type="binding site" evidence="1">
    <location>
        <position position="253"/>
    </location>
    <ligand>
        <name>L-aspartate</name>
        <dbReference type="ChEBI" id="CHEBI:29991"/>
    </ligand>
</feature>
<feature type="binding site" evidence="1">
    <location>
        <position position="294"/>
    </location>
    <ligand>
        <name>carbamoyl phosphate</name>
        <dbReference type="ChEBI" id="CHEBI:58228"/>
    </ligand>
</feature>
<feature type="binding site" evidence="1">
    <location>
        <position position="295"/>
    </location>
    <ligand>
        <name>carbamoyl phosphate</name>
        <dbReference type="ChEBI" id="CHEBI:58228"/>
    </ligand>
</feature>
<proteinExistence type="inferred from homology"/>
<protein>
    <recommendedName>
        <fullName evidence="1">Aspartate carbamoyltransferase catalytic subunit</fullName>
        <ecNumber evidence="1">2.1.3.2</ecNumber>
    </recommendedName>
    <alternativeName>
        <fullName evidence="1">Aspartate transcarbamylase</fullName>
        <shortName evidence="1">ATCase</shortName>
    </alternativeName>
</protein>
<gene>
    <name evidence="1" type="primary">pyrB</name>
    <name type="ordered locus">SynWH7803_0344</name>
</gene>
<organism>
    <name type="scientific">Synechococcus sp. (strain WH7803)</name>
    <dbReference type="NCBI Taxonomy" id="32051"/>
    <lineage>
        <taxon>Bacteria</taxon>
        <taxon>Bacillati</taxon>
        <taxon>Cyanobacteriota</taxon>
        <taxon>Cyanophyceae</taxon>
        <taxon>Synechococcales</taxon>
        <taxon>Synechococcaceae</taxon>
        <taxon>Synechococcus</taxon>
    </lineage>
</organism>
<keyword id="KW-0665">Pyrimidine biosynthesis</keyword>
<keyword id="KW-1185">Reference proteome</keyword>
<keyword id="KW-0808">Transferase</keyword>
<comment type="function">
    <text evidence="1">Catalyzes the condensation of carbamoyl phosphate and aspartate to form carbamoyl aspartate and inorganic phosphate, the committed step in the de novo pyrimidine nucleotide biosynthesis pathway.</text>
</comment>
<comment type="catalytic activity">
    <reaction evidence="1">
        <text>carbamoyl phosphate + L-aspartate = N-carbamoyl-L-aspartate + phosphate + H(+)</text>
        <dbReference type="Rhea" id="RHEA:20013"/>
        <dbReference type="ChEBI" id="CHEBI:15378"/>
        <dbReference type="ChEBI" id="CHEBI:29991"/>
        <dbReference type="ChEBI" id="CHEBI:32814"/>
        <dbReference type="ChEBI" id="CHEBI:43474"/>
        <dbReference type="ChEBI" id="CHEBI:58228"/>
        <dbReference type="EC" id="2.1.3.2"/>
    </reaction>
</comment>
<comment type="pathway">
    <text evidence="1">Pyrimidine metabolism; UMP biosynthesis via de novo pathway; (S)-dihydroorotate from bicarbonate: step 2/3.</text>
</comment>
<comment type="subunit">
    <text evidence="1">Heterododecamer (2C3:3R2) of six catalytic PyrB chains organized as two trimers (C3), and six regulatory PyrI chains organized as three dimers (R2).</text>
</comment>
<comment type="similarity">
    <text evidence="1">Belongs to the aspartate/ornithine carbamoyltransferase superfamily. ATCase family.</text>
</comment>
<evidence type="ECO:0000255" key="1">
    <source>
        <dbReference type="HAMAP-Rule" id="MF_00001"/>
    </source>
</evidence>
<name>PYRB_SYNPW</name>